<proteinExistence type="inferred from homology"/>
<accession>Q9ZCM9</accession>
<name>QUEC_RICPR</name>
<keyword id="KW-0067">ATP-binding</keyword>
<keyword id="KW-0436">Ligase</keyword>
<keyword id="KW-0479">Metal-binding</keyword>
<keyword id="KW-0547">Nucleotide-binding</keyword>
<keyword id="KW-0671">Queuosine biosynthesis</keyword>
<keyword id="KW-1185">Reference proteome</keyword>
<keyword id="KW-0862">Zinc</keyword>
<organism>
    <name type="scientific">Rickettsia prowazekii (strain Madrid E)</name>
    <dbReference type="NCBI Taxonomy" id="272947"/>
    <lineage>
        <taxon>Bacteria</taxon>
        <taxon>Pseudomonadati</taxon>
        <taxon>Pseudomonadota</taxon>
        <taxon>Alphaproteobacteria</taxon>
        <taxon>Rickettsiales</taxon>
        <taxon>Rickettsiaceae</taxon>
        <taxon>Rickettsieae</taxon>
        <taxon>Rickettsia</taxon>
        <taxon>typhus group</taxon>
    </lineage>
</organism>
<protein>
    <recommendedName>
        <fullName evidence="1">7-cyano-7-deazaguanine synthase</fullName>
        <ecNumber evidence="1">6.3.4.20</ecNumber>
    </recommendedName>
    <alternativeName>
        <fullName evidence="1">7-cyano-7-carbaguanine synthase</fullName>
    </alternativeName>
    <alternativeName>
        <fullName evidence="1">PreQ(0) synthase</fullName>
    </alternativeName>
    <alternativeName>
        <fullName evidence="1">Queuosine biosynthesis protein QueC</fullName>
    </alternativeName>
</protein>
<evidence type="ECO:0000255" key="1">
    <source>
        <dbReference type="HAMAP-Rule" id="MF_01633"/>
    </source>
</evidence>
<reference key="1">
    <citation type="journal article" date="1998" name="Nature">
        <title>The genome sequence of Rickettsia prowazekii and the origin of mitochondria.</title>
        <authorList>
            <person name="Andersson S.G.E."/>
            <person name="Zomorodipour A."/>
            <person name="Andersson J.O."/>
            <person name="Sicheritz-Ponten T."/>
            <person name="Alsmark U.C.M."/>
            <person name="Podowski R.M."/>
            <person name="Naeslund A.K."/>
            <person name="Eriksson A.-S."/>
            <person name="Winkler H.H."/>
            <person name="Kurland C.G."/>
        </authorList>
    </citation>
    <scope>NUCLEOTIDE SEQUENCE [LARGE SCALE GENOMIC DNA]</scope>
    <source>
        <strain>Madrid E</strain>
    </source>
</reference>
<dbReference type="EC" id="6.3.4.20" evidence="1"/>
<dbReference type="EMBL" id="AJ235272">
    <property type="protein sequence ID" value="CAA15131.1"/>
    <property type="molecule type" value="Genomic_DNA"/>
</dbReference>
<dbReference type="PIR" id="A71676">
    <property type="entry name" value="A71676"/>
</dbReference>
<dbReference type="RefSeq" id="NP_221055.1">
    <property type="nucleotide sequence ID" value="NC_000963.1"/>
</dbReference>
<dbReference type="RefSeq" id="WP_004598086.1">
    <property type="nucleotide sequence ID" value="NC_000963.1"/>
</dbReference>
<dbReference type="SMR" id="Q9ZCM9"/>
<dbReference type="STRING" id="272947.gene:17555771"/>
<dbReference type="EnsemblBacteria" id="CAA15131">
    <property type="protein sequence ID" value="CAA15131"/>
    <property type="gene ID" value="CAA15131"/>
</dbReference>
<dbReference type="GeneID" id="57569819"/>
<dbReference type="KEGG" id="rpr:RP694"/>
<dbReference type="PATRIC" id="fig|272947.5.peg.716"/>
<dbReference type="eggNOG" id="COG0603">
    <property type="taxonomic scope" value="Bacteria"/>
</dbReference>
<dbReference type="HOGENOM" id="CLU_081854_1_0_5"/>
<dbReference type="OrthoDB" id="9789567at2"/>
<dbReference type="UniPathway" id="UPA00391"/>
<dbReference type="Proteomes" id="UP000002480">
    <property type="component" value="Chromosome"/>
</dbReference>
<dbReference type="GO" id="GO:0005524">
    <property type="term" value="F:ATP binding"/>
    <property type="evidence" value="ECO:0007669"/>
    <property type="project" value="UniProtKB-UniRule"/>
</dbReference>
<dbReference type="GO" id="GO:0016879">
    <property type="term" value="F:ligase activity, forming carbon-nitrogen bonds"/>
    <property type="evidence" value="ECO:0007669"/>
    <property type="project" value="UniProtKB-UniRule"/>
</dbReference>
<dbReference type="GO" id="GO:0008270">
    <property type="term" value="F:zinc ion binding"/>
    <property type="evidence" value="ECO:0007669"/>
    <property type="project" value="UniProtKB-UniRule"/>
</dbReference>
<dbReference type="GO" id="GO:0008616">
    <property type="term" value="P:queuosine biosynthetic process"/>
    <property type="evidence" value="ECO:0007669"/>
    <property type="project" value="UniProtKB-UniRule"/>
</dbReference>
<dbReference type="CDD" id="cd01995">
    <property type="entry name" value="QueC-like"/>
    <property type="match status" value="1"/>
</dbReference>
<dbReference type="Gene3D" id="3.40.50.620">
    <property type="entry name" value="HUPs"/>
    <property type="match status" value="1"/>
</dbReference>
<dbReference type="HAMAP" id="MF_01633">
    <property type="entry name" value="QueC"/>
    <property type="match status" value="1"/>
</dbReference>
<dbReference type="InterPro" id="IPR018317">
    <property type="entry name" value="QueC"/>
</dbReference>
<dbReference type="InterPro" id="IPR014729">
    <property type="entry name" value="Rossmann-like_a/b/a_fold"/>
</dbReference>
<dbReference type="NCBIfam" id="TIGR00364">
    <property type="entry name" value="7-cyano-7-deazaguanine synthase QueC"/>
    <property type="match status" value="1"/>
</dbReference>
<dbReference type="PANTHER" id="PTHR42914">
    <property type="entry name" value="7-CYANO-7-DEAZAGUANINE SYNTHASE"/>
    <property type="match status" value="1"/>
</dbReference>
<dbReference type="PANTHER" id="PTHR42914:SF1">
    <property type="entry name" value="7-CYANO-7-DEAZAGUANINE SYNTHASE"/>
    <property type="match status" value="1"/>
</dbReference>
<dbReference type="Pfam" id="PF06508">
    <property type="entry name" value="QueC"/>
    <property type="match status" value="1"/>
</dbReference>
<dbReference type="PIRSF" id="PIRSF006293">
    <property type="entry name" value="ExsB"/>
    <property type="match status" value="1"/>
</dbReference>
<dbReference type="SUPFAM" id="SSF52402">
    <property type="entry name" value="Adenine nucleotide alpha hydrolases-like"/>
    <property type="match status" value="1"/>
</dbReference>
<comment type="function">
    <text evidence="1">Catalyzes the ATP-dependent conversion of 7-carboxy-7-deazaguanine (CDG) to 7-cyano-7-deazaguanine (preQ(0)).</text>
</comment>
<comment type="catalytic activity">
    <reaction evidence="1">
        <text>7-carboxy-7-deazaguanine + NH4(+) + ATP = 7-cyano-7-deazaguanine + ADP + phosphate + H2O + H(+)</text>
        <dbReference type="Rhea" id="RHEA:27982"/>
        <dbReference type="ChEBI" id="CHEBI:15377"/>
        <dbReference type="ChEBI" id="CHEBI:15378"/>
        <dbReference type="ChEBI" id="CHEBI:28938"/>
        <dbReference type="ChEBI" id="CHEBI:30616"/>
        <dbReference type="ChEBI" id="CHEBI:43474"/>
        <dbReference type="ChEBI" id="CHEBI:45075"/>
        <dbReference type="ChEBI" id="CHEBI:61036"/>
        <dbReference type="ChEBI" id="CHEBI:456216"/>
        <dbReference type="EC" id="6.3.4.20"/>
    </reaction>
</comment>
<comment type="cofactor">
    <cofactor evidence="1">
        <name>Zn(2+)</name>
        <dbReference type="ChEBI" id="CHEBI:29105"/>
    </cofactor>
    <text evidence="1">Binds 1 zinc ion per subunit.</text>
</comment>
<comment type="pathway">
    <text evidence="1">Purine metabolism; 7-cyano-7-deazaguanine biosynthesis.</text>
</comment>
<comment type="similarity">
    <text evidence="1">Belongs to the QueC family.</text>
</comment>
<gene>
    <name evidence="1" type="primary">queC</name>
    <name type="ordered locus">RP694</name>
</gene>
<feature type="chain" id="PRO_0000246914" description="7-cyano-7-deazaguanine synthase">
    <location>
        <begin position="1"/>
        <end position="227"/>
    </location>
</feature>
<feature type="binding site" evidence="1">
    <location>
        <begin position="8"/>
        <end position="18"/>
    </location>
    <ligand>
        <name>ATP</name>
        <dbReference type="ChEBI" id="CHEBI:30616"/>
    </ligand>
</feature>
<feature type="binding site" evidence="1">
    <location>
        <position position="192"/>
    </location>
    <ligand>
        <name>Zn(2+)</name>
        <dbReference type="ChEBI" id="CHEBI:29105"/>
    </ligand>
</feature>
<feature type="binding site" evidence="1">
    <location>
        <position position="202"/>
    </location>
    <ligand>
        <name>Zn(2+)</name>
        <dbReference type="ChEBI" id="CHEBI:29105"/>
    </ligand>
</feature>
<feature type="binding site" evidence="1">
    <location>
        <position position="205"/>
    </location>
    <ligand>
        <name>Zn(2+)</name>
        <dbReference type="ChEBI" id="CHEBI:29105"/>
    </ligand>
</feature>
<feature type="binding site" evidence="1">
    <location>
        <position position="208"/>
    </location>
    <ligand>
        <name>Zn(2+)</name>
        <dbReference type="ChEBI" id="CHEBI:29105"/>
    </ligand>
</feature>
<sequence>MKKSVNLLSGGTDSATVLAIASEMCYEIYAMSFNYGQRNNAELRKVKELIKKYNVKQHKIVDIDLRAFGGSALTDDNIDVPYYHGINALPEIVPVTYVPARNTIFLSYAVGFAEVIGSQDIFIGVHTSDSANYPDCCPEYIQSFEKMVNLATNMGVQGKKITIHAPLIDMTKEQIIRTGLKLGVDYKNTISCYSPTEDDLSCGNCLACIIRLDAFKKNNIQDPIKYV</sequence>